<gene>
    <name evidence="1" type="primary">rpsE</name>
    <name type="ordered locus">lpg0346</name>
</gene>
<evidence type="ECO:0000255" key="1">
    <source>
        <dbReference type="HAMAP-Rule" id="MF_01307"/>
    </source>
</evidence>
<evidence type="ECO:0000305" key="2"/>
<comment type="function">
    <text evidence="1">With S4 and S12 plays an important role in translational accuracy.</text>
</comment>
<comment type="function">
    <text evidence="1">Located at the back of the 30S subunit body where it stabilizes the conformation of the head with respect to the body.</text>
</comment>
<comment type="subunit">
    <text evidence="1">Part of the 30S ribosomal subunit. Contacts proteins S4 and S8.</text>
</comment>
<comment type="domain">
    <text>The N-terminal domain interacts with the head of the 30S subunit; the C-terminal domain interacts with the body and contacts protein S4. The interaction surface between S4 and S5 is involved in control of translational fidelity.</text>
</comment>
<comment type="similarity">
    <text evidence="1">Belongs to the universal ribosomal protein uS5 family.</text>
</comment>
<protein>
    <recommendedName>
        <fullName evidence="1">Small ribosomal subunit protein uS5</fullName>
    </recommendedName>
    <alternativeName>
        <fullName evidence="2">30S ribosomal protein S5</fullName>
    </alternativeName>
</protein>
<accession>Q5ZYM6</accession>
<dbReference type="EMBL" id="AE017354">
    <property type="protein sequence ID" value="AAU26443.1"/>
    <property type="molecule type" value="Genomic_DNA"/>
</dbReference>
<dbReference type="RefSeq" id="WP_010946095.1">
    <property type="nucleotide sequence ID" value="NC_002942.5"/>
</dbReference>
<dbReference type="RefSeq" id="YP_094390.1">
    <property type="nucleotide sequence ID" value="NC_002942.5"/>
</dbReference>
<dbReference type="SMR" id="Q5ZYM6"/>
<dbReference type="STRING" id="272624.lpg0346"/>
<dbReference type="PaxDb" id="272624-lpg0346"/>
<dbReference type="GeneID" id="57034349"/>
<dbReference type="KEGG" id="lpn:lpg0346"/>
<dbReference type="PATRIC" id="fig|272624.6.peg.353"/>
<dbReference type="eggNOG" id="COG0098">
    <property type="taxonomic scope" value="Bacteria"/>
</dbReference>
<dbReference type="HOGENOM" id="CLU_065898_2_2_6"/>
<dbReference type="OrthoDB" id="9809045at2"/>
<dbReference type="Proteomes" id="UP000000609">
    <property type="component" value="Chromosome"/>
</dbReference>
<dbReference type="GO" id="GO:0015935">
    <property type="term" value="C:small ribosomal subunit"/>
    <property type="evidence" value="ECO:0007669"/>
    <property type="project" value="InterPro"/>
</dbReference>
<dbReference type="GO" id="GO:0019843">
    <property type="term" value="F:rRNA binding"/>
    <property type="evidence" value="ECO:0007669"/>
    <property type="project" value="UniProtKB-UniRule"/>
</dbReference>
<dbReference type="GO" id="GO:0003735">
    <property type="term" value="F:structural constituent of ribosome"/>
    <property type="evidence" value="ECO:0007669"/>
    <property type="project" value="InterPro"/>
</dbReference>
<dbReference type="GO" id="GO:0006412">
    <property type="term" value="P:translation"/>
    <property type="evidence" value="ECO:0007669"/>
    <property type="project" value="UniProtKB-UniRule"/>
</dbReference>
<dbReference type="FunFam" id="3.30.160.20:FF:000001">
    <property type="entry name" value="30S ribosomal protein S5"/>
    <property type="match status" value="1"/>
</dbReference>
<dbReference type="FunFam" id="3.30.230.10:FF:000002">
    <property type="entry name" value="30S ribosomal protein S5"/>
    <property type="match status" value="1"/>
</dbReference>
<dbReference type="Gene3D" id="3.30.160.20">
    <property type="match status" value="1"/>
</dbReference>
<dbReference type="Gene3D" id="3.30.230.10">
    <property type="match status" value="1"/>
</dbReference>
<dbReference type="HAMAP" id="MF_01307_B">
    <property type="entry name" value="Ribosomal_uS5_B"/>
    <property type="match status" value="1"/>
</dbReference>
<dbReference type="InterPro" id="IPR020568">
    <property type="entry name" value="Ribosomal_Su5_D2-typ_SF"/>
</dbReference>
<dbReference type="InterPro" id="IPR000851">
    <property type="entry name" value="Ribosomal_uS5"/>
</dbReference>
<dbReference type="InterPro" id="IPR005712">
    <property type="entry name" value="Ribosomal_uS5_bac-type"/>
</dbReference>
<dbReference type="InterPro" id="IPR005324">
    <property type="entry name" value="Ribosomal_uS5_C"/>
</dbReference>
<dbReference type="InterPro" id="IPR013810">
    <property type="entry name" value="Ribosomal_uS5_N"/>
</dbReference>
<dbReference type="InterPro" id="IPR018192">
    <property type="entry name" value="Ribosomal_uS5_N_CS"/>
</dbReference>
<dbReference type="InterPro" id="IPR014721">
    <property type="entry name" value="Ribsml_uS5_D2-typ_fold_subgr"/>
</dbReference>
<dbReference type="NCBIfam" id="TIGR01021">
    <property type="entry name" value="rpsE_bact"/>
    <property type="match status" value="1"/>
</dbReference>
<dbReference type="PANTHER" id="PTHR48277">
    <property type="entry name" value="MITOCHONDRIAL RIBOSOMAL PROTEIN S5"/>
    <property type="match status" value="1"/>
</dbReference>
<dbReference type="PANTHER" id="PTHR48277:SF1">
    <property type="entry name" value="MITOCHONDRIAL RIBOSOMAL PROTEIN S5"/>
    <property type="match status" value="1"/>
</dbReference>
<dbReference type="Pfam" id="PF00333">
    <property type="entry name" value="Ribosomal_S5"/>
    <property type="match status" value="1"/>
</dbReference>
<dbReference type="Pfam" id="PF03719">
    <property type="entry name" value="Ribosomal_S5_C"/>
    <property type="match status" value="1"/>
</dbReference>
<dbReference type="SUPFAM" id="SSF54768">
    <property type="entry name" value="dsRNA-binding domain-like"/>
    <property type="match status" value="1"/>
</dbReference>
<dbReference type="SUPFAM" id="SSF54211">
    <property type="entry name" value="Ribosomal protein S5 domain 2-like"/>
    <property type="match status" value="1"/>
</dbReference>
<dbReference type="PROSITE" id="PS00585">
    <property type="entry name" value="RIBOSOMAL_S5"/>
    <property type="match status" value="1"/>
</dbReference>
<dbReference type="PROSITE" id="PS50881">
    <property type="entry name" value="S5_DSRBD"/>
    <property type="match status" value="1"/>
</dbReference>
<reference key="1">
    <citation type="journal article" date="2004" name="Science">
        <title>The genomic sequence of the accidental pathogen Legionella pneumophila.</title>
        <authorList>
            <person name="Chien M."/>
            <person name="Morozova I."/>
            <person name="Shi S."/>
            <person name="Sheng H."/>
            <person name="Chen J."/>
            <person name="Gomez S.M."/>
            <person name="Asamani G."/>
            <person name="Hill K."/>
            <person name="Nuara J."/>
            <person name="Feder M."/>
            <person name="Rineer J."/>
            <person name="Greenberg J.J."/>
            <person name="Steshenko V."/>
            <person name="Park S.H."/>
            <person name="Zhao B."/>
            <person name="Teplitskaya E."/>
            <person name="Edwards J.R."/>
            <person name="Pampou S."/>
            <person name="Georghiou A."/>
            <person name="Chou I.-C."/>
            <person name="Iannuccilli W."/>
            <person name="Ulz M.E."/>
            <person name="Kim D.H."/>
            <person name="Geringer-Sameth A."/>
            <person name="Goldsberry C."/>
            <person name="Morozov P."/>
            <person name="Fischer S.G."/>
            <person name="Segal G."/>
            <person name="Qu X."/>
            <person name="Rzhetsky A."/>
            <person name="Zhang P."/>
            <person name="Cayanis E."/>
            <person name="De Jong P.J."/>
            <person name="Ju J."/>
            <person name="Kalachikov S."/>
            <person name="Shuman H.A."/>
            <person name="Russo J.J."/>
        </authorList>
    </citation>
    <scope>NUCLEOTIDE SEQUENCE [LARGE SCALE GENOMIC DNA]</scope>
    <source>
        <strain>Philadelphia 1 / ATCC 33152 / DSM 7513</strain>
    </source>
</reference>
<sequence>MSFDELPKSDGYQEKLVSVTRTAKVVKGGRVFGFAVLVVVGDGKGKVGFGRGKAREVPIAIQKAMDQAKKNMVYIPLSGTTIFHEITWNYGASKVFMKPASEGTGIIAGGAMRAVLEVLGVQNILAKSIGSTNPSNIVRATIGALTHIGTPDYVAAKRGKTVEEVMAG</sequence>
<keyword id="KW-1185">Reference proteome</keyword>
<keyword id="KW-0687">Ribonucleoprotein</keyword>
<keyword id="KW-0689">Ribosomal protein</keyword>
<keyword id="KW-0694">RNA-binding</keyword>
<keyword id="KW-0699">rRNA-binding</keyword>
<name>RS5_LEGPH</name>
<organism>
    <name type="scientific">Legionella pneumophila subsp. pneumophila (strain Philadelphia 1 / ATCC 33152 / DSM 7513)</name>
    <dbReference type="NCBI Taxonomy" id="272624"/>
    <lineage>
        <taxon>Bacteria</taxon>
        <taxon>Pseudomonadati</taxon>
        <taxon>Pseudomonadota</taxon>
        <taxon>Gammaproteobacteria</taxon>
        <taxon>Legionellales</taxon>
        <taxon>Legionellaceae</taxon>
        <taxon>Legionella</taxon>
    </lineage>
</organism>
<feature type="chain" id="PRO_0000131533" description="Small ribosomal subunit protein uS5">
    <location>
        <begin position="1"/>
        <end position="168"/>
    </location>
</feature>
<feature type="domain" description="S5 DRBM" evidence="1">
    <location>
        <begin position="12"/>
        <end position="75"/>
    </location>
</feature>
<proteinExistence type="inferred from homology"/>